<accession>Q163R6</accession>
<reference key="1">
    <citation type="journal article" date="2007" name="J. Bacteriol.">
        <title>The complete genome sequence of Roseobacter denitrificans reveals a mixotrophic rather than photosynthetic metabolism.</title>
        <authorList>
            <person name="Swingley W.D."/>
            <person name="Sadekar S."/>
            <person name="Mastrian S.D."/>
            <person name="Matthies H.J."/>
            <person name="Hao J."/>
            <person name="Ramos H."/>
            <person name="Acharya C.R."/>
            <person name="Conrad A.L."/>
            <person name="Taylor H.L."/>
            <person name="Dejesa L.C."/>
            <person name="Shah M.K."/>
            <person name="O'Huallachain M.E."/>
            <person name="Lince M.T."/>
            <person name="Blankenship R.E."/>
            <person name="Beatty J.T."/>
            <person name="Touchman J.W."/>
        </authorList>
    </citation>
    <scope>NUCLEOTIDE SEQUENCE [LARGE SCALE GENOMIC DNA]</scope>
    <source>
        <strain>ATCC 33942 / OCh 114</strain>
    </source>
</reference>
<feature type="chain" id="PRO_0000298847" description="NADH-quinone oxidoreductase subunit H">
    <location>
        <begin position="1"/>
        <end position="345"/>
    </location>
</feature>
<feature type="transmembrane region" description="Helical" evidence="1">
    <location>
        <begin position="13"/>
        <end position="33"/>
    </location>
</feature>
<feature type="transmembrane region" description="Helical" evidence="1">
    <location>
        <begin position="84"/>
        <end position="104"/>
    </location>
</feature>
<feature type="transmembrane region" description="Helical" evidence="1">
    <location>
        <begin position="115"/>
        <end position="135"/>
    </location>
</feature>
<feature type="transmembrane region" description="Helical" evidence="1">
    <location>
        <begin position="161"/>
        <end position="181"/>
    </location>
</feature>
<feature type="transmembrane region" description="Helical" evidence="1">
    <location>
        <begin position="190"/>
        <end position="210"/>
    </location>
</feature>
<feature type="transmembrane region" description="Helical" evidence="1">
    <location>
        <begin position="248"/>
        <end position="268"/>
    </location>
</feature>
<feature type="transmembrane region" description="Helical" evidence="1">
    <location>
        <begin position="277"/>
        <end position="297"/>
    </location>
</feature>
<feature type="transmembrane region" description="Helical" evidence="1">
    <location>
        <begin position="309"/>
        <end position="329"/>
    </location>
</feature>
<name>NUOH_ROSDO</name>
<organism>
    <name type="scientific">Roseobacter denitrificans (strain ATCC 33942 / OCh 114)</name>
    <name type="common">Erythrobacter sp. (strain OCh 114)</name>
    <name type="synonym">Roseobacter denitrificans</name>
    <dbReference type="NCBI Taxonomy" id="375451"/>
    <lineage>
        <taxon>Bacteria</taxon>
        <taxon>Pseudomonadati</taxon>
        <taxon>Pseudomonadota</taxon>
        <taxon>Alphaproteobacteria</taxon>
        <taxon>Rhodobacterales</taxon>
        <taxon>Roseobacteraceae</taxon>
        <taxon>Roseobacter</taxon>
    </lineage>
</organism>
<keyword id="KW-0997">Cell inner membrane</keyword>
<keyword id="KW-1003">Cell membrane</keyword>
<keyword id="KW-0472">Membrane</keyword>
<keyword id="KW-0520">NAD</keyword>
<keyword id="KW-0874">Quinone</keyword>
<keyword id="KW-1185">Reference proteome</keyword>
<keyword id="KW-1278">Translocase</keyword>
<keyword id="KW-0812">Transmembrane</keyword>
<keyword id="KW-1133">Transmembrane helix</keyword>
<keyword id="KW-0830">Ubiquinone</keyword>
<comment type="function">
    <text evidence="1">NDH-1 shuttles electrons from NADH, via FMN and iron-sulfur (Fe-S) centers, to quinones in the respiratory chain. The immediate electron acceptor for the enzyme in this species is believed to be ubiquinone. Couples the redox reaction to proton translocation (for every two electrons transferred, four hydrogen ions are translocated across the cytoplasmic membrane), and thus conserves the redox energy in a proton gradient. This subunit may bind ubiquinone.</text>
</comment>
<comment type="catalytic activity">
    <reaction evidence="1">
        <text>a quinone + NADH + 5 H(+)(in) = a quinol + NAD(+) + 4 H(+)(out)</text>
        <dbReference type="Rhea" id="RHEA:57888"/>
        <dbReference type="ChEBI" id="CHEBI:15378"/>
        <dbReference type="ChEBI" id="CHEBI:24646"/>
        <dbReference type="ChEBI" id="CHEBI:57540"/>
        <dbReference type="ChEBI" id="CHEBI:57945"/>
        <dbReference type="ChEBI" id="CHEBI:132124"/>
    </reaction>
</comment>
<comment type="subunit">
    <text evidence="1">NDH-1 is composed of 14 different subunits. Subunits NuoA, H, J, K, L, M, N constitute the membrane sector of the complex.</text>
</comment>
<comment type="subcellular location">
    <subcellularLocation>
        <location evidence="1">Cell inner membrane</location>
        <topology evidence="1">Multi-pass membrane protein</topology>
    </subcellularLocation>
</comment>
<comment type="similarity">
    <text evidence="1">Belongs to the complex I subunit 1 family.</text>
</comment>
<proteinExistence type="inferred from homology"/>
<protein>
    <recommendedName>
        <fullName evidence="1">NADH-quinone oxidoreductase subunit H</fullName>
        <ecNumber evidence="1">7.1.1.-</ecNumber>
    </recommendedName>
    <alternativeName>
        <fullName evidence="1">NADH dehydrogenase I subunit H</fullName>
    </alternativeName>
    <alternativeName>
        <fullName evidence="1">NDH-1 subunit H</fullName>
    </alternativeName>
</protein>
<sequence>MADFFTTPGGIAVLILAQVLAVIGFVMVSLLFLVYGDRKIWAAVQMRRGPNVVGTFGLLQTVADALKYVVKEVVVPAGADKTVFMLAPMTSFVLALLAWAVIPFNDGWVLSDINVAILFVFAISSLEVYGVIMGGWASNSKYPFLGSLRSAAQMISYEVSLGLIIIGVIISTGSMNFGGIVAAQDGPYGFFSWYWLPHFPMVFLFFISCLAETNRPPFDLPEAESELVAGYQVEYSSTPFLLFMAGEYIAIFLMCALTSLLFFGGWLSPIPGLPDGVFWMIAKMAFFFFLFAMVKAITPRYRYDQLMRLGWKVFLPFSLVWVVFVAFAAKFEWFWGAYARWGMGG</sequence>
<dbReference type="EC" id="7.1.1.-" evidence="1"/>
<dbReference type="EMBL" id="CP000362">
    <property type="protein sequence ID" value="ABG32777.1"/>
    <property type="molecule type" value="Genomic_DNA"/>
</dbReference>
<dbReference type="RefSeq" id="WP_011569393.1">
    <property type="nucleotide sequence ID" value="NC_008209.1"/>
</dbReference>
<dbReference type="SMR" id="Q163R6"/>
<dbReference type="STRING" id="375451.RD1_3276"/>
<dbReference type="KEGG" id="rde:RD1_3276"/>
<dbReference type="eggNOG" id="COG1005">
    <property type="taxonomic scope" value="Bacteria"/>
</dbReference>
<dbReference type="HOGENOM" id="CLU_015134_0_1_5"/>
<dbReference type="OrthoDB" id="9803734at2"/>
<dbReference type="Proteomes" id="UP000007029">
    <property type="component" value="Chromosome"/>
</dbReference>
<dbReference type="GO" id="GO:0005886">
    <property type="term" value="C:plasma membrane"/>
    <property type="evidence" value="ECO:0007669"/>
    <property type="project" value="UniProtKB-SubCell"/>
</dbReference>
<dbReference type="GO" id="GO:0003954">
    <property type="term" value="F:NADH dehydrogenase activity"/>
    <property type="evidence" value="ECO:0007669"/>
    <property type="project" value="TreeGrafter"/>
</dbReference>
<dbReference type="GO" id="GO:0016655">
    <property type="term" value="F:oxidoreductase activity, acting on NAD(P)H, quinone or similar compound as acceptor"/>
    <property type="evidence" value="ECO:0007669"/>
    <property type="project" value="UniProtKB-UniRule"/>
</dbReference>
<dbReference type="GO" id="GO:0048038">
    <property type="term" value="F:quinone binding"/>
    <property type="evidence" value="ECO:0007669"/>
    <property type="project" value="UniProtKB-KW"/>
</dbReference>
<dbReference type="GO" id="GO:0009060">
    <property type="term" value="P:aerobic respiration"/>
    <property type="evidence" value="ECO:0007669"/>
    <property type="project" value="TreeGrafter"/>
</dbReference>
<dbReference type="HAMAP" id="MF_01350">
    <property type="entry name" value="NDH1_NuoH"/>
    <property type="match status" value="1"/>
</dbReference>
<dbReference type="InterPro" id="IPR001694">
    <property type="entry name" value="NADH_UbQ_OxRdtase_su1/FPO"/>
</dbReference>
<dbReference type="InterPro" id="IPR018086">
    <property type="entry name" value="NADH_UbQ_OxRdtase_su1_CS"/>
</dbReference>
<dbReference type="NCBIfam" id="NF004741">
    <property type="entry name" value="PRK06076.1-2"/>
    <property type="match status" value="1"/>
</dbReference>
<dbReference type="NCBIfam" id="NF004745">
    <property type="entry name" value="PRK06076.1-6"/>
    <property type="match status" value="1"/>
</dbReference>
<dbReference type="PANTHER" id="PTHR11432">
    <property type="entry name" value="NADH DEHYDROGENASE SUBUNIT 1"/>
    <property type="match status" value="1"/>
</dbReference>
<dbReference type="PANTHER" id="PTHR11432:SF3">
    <property type="entry name" value="NADH-UBIQUINONE OXIDOREDUCTASE CHAIN 1"/>
    <property type="match status" value="1"/>
</dbReference>
<dbReference type="Pfam" id="PF00146">
    <property type="entry name" value="NADHdh"/>
    <property type="match status" value="1"/>
</dbReference>
<dbReference type="PROSITE" id="PS00667">
    <property type="entry name" value="COMPLEX1_ND1_1"/>
    <property type="match status" value="1"/>
</dbReference>
<dbReference type="PROSITE" id="PS00668">
    <property type="entry name" value="COMPLEX1_ND1_2"/>
    <property type="match status" value="1"/>
</dbReference>
<evidence type="ECO:0000255" key="1">
    <source>
        <dbReference type="HAMAP-Rule" id="MF_01350"/>
    </source>
</evidence>
<gene>
    <name evidence="1" type="primary">nuoH</name>
    <name type="ordered locus">RD1_3276</name>
</gene>